<dbReference type="EMBL" id="AF222894">
    <property type="protein sequence ID" value="AAF30639.1"/>
    <property type="molecule type" value="Genomic_DNA"/>
</dbReference>
<dbReference type="RefSeq" id="WP_004025692.1">
    <property type="nucleotide sequence ID" value="NC_002162.1"/>
</dbReference>
<dbReference type="SMR" id="Q9PQR1"/>
<dbReference type="STRING" id="273119.UU230"/>
<dbReference type="EnsemblBacteria" id="AAF30639">
    <property type="protein sequence ID" value="AAF30639"/>
    <property type="gene ID" value="UU230"/>
</dbReference>
<dbReference type="GeneID" id="93848705"/>
<dbReference type="KEGG" id="uur:UU230"/>
<dbReference type="eggNOG" id="COG0051">
    <property type="taxonomic scope" value="Bacteria"/>
</dbReference>
<dbReference type="HOGENOM" id="CLU_122625_1_3_14"/>
<dbReference type="OrthoDB" id="9804464at2"/>
<dbReference type="Proteomes" id="UP000000423">
    <property type="component" value="Chromosome"/>
</dbReference>
<dbReference type="GO" id="GO:1990904">
    <property type="term" value="C:ribonucleoprotein complex"/>
    <property type="evidence" value="ECO:0007669"/>
    <property type="project" value="UniProtKB-KW"/>
</dbReference>
<dbReference type="GO" id="GO:0005840">
    <property type="term" value="C:ribosome"/>
    <property type="evidence" value="ECO:0007669"/>
    <property type="project" value="UniProtKB-KW"/>
</dbReference>
<dbReference type="GO" id="GO:0003735">
    <property type="term" value="F:structural constituent of ribosome"/>
    <property type="evidence" value="ECO:0007669"/>
    <property type="project" value="InterPro"/>
</dbReference>
<dbReference type="GO" id="GO:0000049">
    <property type="term" value="F:tRNA binding"/>
    <property type="evidence" value="ECO:0007669"/>
    <property type="project" value="UniProtKB-UniRule"/>
</dbReference>
<dbReference type="GO" id="GO:0006412">
    <property type="term" value="P:translation"/>
    <property type="evidence" value="ECO:0007669"/>
    <property type="project" value="UniProtKB-UniRule"/>
</dbReference>
<dbReference type="FunFam" id="3.30.70.600:FF:000003">
    <property type="entry name" value="30S ribosomal protein S10"/>
    <property type="match status" value="1"/>
</dbReference>
<dbReference type="Gene3D" id="3.30.70.600">
    <property type="entry name" value="Ribosomal protein S10 domain"/>
    <property type="match status" value="1"/>
</dbReference>
<dbReference type="HAMAP" id="MF_00508">
    <property type="entry name" value="Ribosomal_uS10"/>
    <property type="match status" value="1"/>
</dbReference>
<dbReference type="InterPro" id="IPR001848">
    <property type="entry name" value="Ribosomal_uS10"/>
</dbReference>
<dbReference type="InterPro" id="IPR027486">
    <property type="entry name" value="Ribosomal_uS10_dom"/>
</dbReference>
<dbReference type="InterPro" id="IPR036838">
    <property type="entry name" value="Ribosomal_uS10_dom_sf"/>
</dbReference>
<dbReference type="NCBIfam" id="NF001861">
    <property type="entry name" value="PRK00596.1"/>
    <property type="match status" value="1"/>
</dbReference>
<dbReference type="NCBIfam" id="TIGR01049">
    <property type="entry name" value="rpsJ_bact"/>
    <property type="match status" value="1"/>
</dbReference>
<dbReference type="PANTHER" id="PTHR11700">
    <property type="entry name" value="30S RIBOSOMAL PROTEIN S10 FAMILY MEMBER"/>
    <property type="match status" value="1"/>
</dbReference>
<dbReference type="Pfam" id="PF00338">
    <property type="entry name" value="Ribosomal_S10"/>
    <property type="match status" value="1"/>
</dbReference>
<dbReference type="PRINTS" id="PR00971">
    <property type="entry name" value="RIBOSOMALS10"/>
</dbReference>
<dbReference type="SMART" id="SM01403">
    <property type="entry name" value="Ribosomal_S10"/>
    <property type="match status" value="1"/>
</dbReference>
<dbReference type="SUPFAM" id="SSF54999">
    <property type="entry name" value="Ribosomal protein S10"/>
    <property type="match status" value="1"/>
</dbReference>
<name>RS10_UREPA</name>
<organism>
    <name type="scientific">Ureaplasma parvum serovar 3 (strain ATCC 700970)</name>
    <dbReference type="NCBI Taxonomy" id="273119"/>
    <lineage>
        <taxon>Bacteria</taxon>
        <taxon>Bacillati</taxon>
        <taxon>Mycoplasmatota</taxon>
        <taxon>Mycoplasmoidales</taxon>
        <taxon>Mycoplasmoidaceae</taxon>
        <taxon>Ureaplasma</taxon>
    </lineage>
</organism>
<accession>Q9PQR1</accession>
<sequence length="101" mass="11778">MNQELRIRLESYDHRLLDDTVKTIVNISNSTGSKLRGPIPLPTKKEIFTILRSPHVNKSSREQFERRTHKRLIILENPQPKTMEALKRLSVPFGVEVTFKI</sequence>
<comment type="function">
    <text evidence="1">Involved in the binding of tRNA to the ribosomes.</text>
</comment>
<comment type="subunit">
    <text evidence="1">Part of the 30S ribosomal subunit.</text>
</comment>
<comment type="similarity">
    <text evidence="1">Belongs to the universal ribosomal protein uS10 family.</text>
</comment>
<feature type="chain" id="PRO_0000146628" description="Small ribosomal subunit protein uS10">
    <location>
        <begin position="1"/>
        <end position="101"/>
    </location>
</feature>
<gene>
    <name evidence="1" type="primary">rpsJ</name>
    <name evidence="1" type="synonym">rps10</name>
    <name type="ordered locus">UU230</name>
</gene>
<proteinExistence type="inferred from homology"/>
<protein>
    <recommendedName>
        <fullName evidence="1">Small ribosomal subunit protein uS10</fullName>
    </recommendedName>
    <alternativeName>
        <fullName evidence="2">30S ribosomal protein S10</fullName>
    </alternativeName>
</protein>
<evidence type="ECO:0000255" key="1">
    <source>
        <dbReference type="HAMAP-Rule" id="MF_00508"/>
    </source>
</evidence>
<evidence type="ECO:0000305" key="2"/>
<keyword id="KW-1185">Reference proteome</keyword>
<keyword id="KW-0687">Ribonucleoprotein</keyword>
<keyword id="KW-0689">Ribosomal protein</keyword>
<reference key="1">
    <citation type="journal article" date="2000" name="Nature">
        <title>The complete sequence of the mucosal pathogen Ureaplasma urealyticum.</title>
        <authorList>
            <person name="Glass J.I."/>
            <person name="Lefkowitz E.J."/>
            <person name="Glass J.S."/>
            <person name="Heiner C.R."/>
            <person name="Chen E.Y."/>
            <person name="Cassell G.H."/>
        </authorList>
    </citation>
    <scope>NUCLEOTIDE SEQUENCE [LARGE SCALE GENOMIC DNA]</scope>
    <source>
        <strain>ATCC 700970</strain>
    </source>
</reference>